<protein>
    <recommendedName>
        <fullName>Monothiol glutaredoxin-S9</fullName>
    </recommendedName>
</protein>
<sequence>MYQAIPYNANRAWPAASRPATAAAAPPPPPPRGEEEEVRRAVAECPVVVVGRSGCCLSHVVKRLLQGLGVNPAVHEVAGEAELAGVVAGGGGVALPAVFVGGRLLGGLDRLMAVHISGELVPILKEAGALWL</sequence>
<name>GRXS9_ORYSJ</name>
<accession>P0C291</accession>
<keyword id="KW-0001">2Fe-2S</keyword>
<keyword id="KW-0963">Cytoplasm</keyword>
<keyword id="KW-0408">Iron</keyword>
<keyword id="KW-0411">Iron-sulfur</keyword>
<keyword id="KW-0479">Metal-binding</keyword>
<keyword id="KW-0539">Nucleus</keyword>
<keyword id="KW-0676">Redox-active center</keyword>
<keyword id="KW-1185">Reference proteome</keyword>
<reference key="1">
    <citation type="journal article" date="2005" name="Mol. Genet. Genomics">
        <title>A fine physical map of the rice chromosome 5.</title>
        <authorList>
            <person name="Cheng C.-H."/>
            <person name="Chung M.C."/>
            <person name="Liu S.-M."/>
            <person name="Chen S.-K."/>
            <person name="Kao F.Y."/>
            <person name="Lin S.-J."/>
            <person name="Hsiao S.-H."/>
            <person name="Tseng I.C."/>
            <person name="Hsing Y.-I.C."/>
            <person name="Wu H.-P."/>
            <person name="Chen C.-S."/>
            <person name="Shaw J.-F."/>
            <person name="Wu J."/>
            <person name="Matsumoto T."/>
            <person name="Sasaki T."/>
            <person name="Chen H.-C."/>
            <person name="Chow T.-Y."/>
        </authorList>
    </citation>
    <scope>NUCLEOTIDE SEQUENCE [LARGE SCALE GENOMIC DNA]</scope>
    <source>
        <strain>cv. Nipponbare</strain>
    </source>
</reference>
<reference key="2">
    <citation type="journal article" date="2005" name="Nature">
        <title>The map-based sequence of the rice genome.</title>
        <authorList>
            <consortium name="International rice genome sequencing project (IRGSP)"/>
        </authorList>
    </citation>
    <scope>NUCLEOTIDE SEQUENCE [LARGE SCALE GENOMIC DNA]</scope>
    <source>
        <strain>cv. Nipponbare</strain>
    </source>
</reference>
<reference key="3">
    <citation type="journal article" date="2013" name="Rice">
        <title>Improvement of the Oryza sativa Nipponbare reference genome using next generation sequence and optical map data.</title>
        <authorList>
            <person name="Kawahara Y."/>
            <person name="de la Bastide M."/>
            <person name="Hamilton J.P."/>
            <person name="Kanamori H."/>
            <person name="McCombie W.R."/>
            <person name="Ouyang S."/>
            <person name="Schwartz D.C."/>
            <person name="Tanaka T."/>
            <person name="Wu J."/>
            <person name="Zhou S."/>
            <person name="Childs K.L."/>
            <person name="Davidson R.M."/>
            <person name="Lin H."/>
            <person name="Quesada-Ocampo L."/>
            <person name="Vaillancourt B."/>
            <person name="Sakai H."/>
            <person name="Lee S.S."/>
            <person name="Kim J."/>
            <person name="Numa H."/>
            <person name="Itoh T."/>
            <person name="Buell C.R."/>
            <person name="Matsumoto T."/>
        </authorList>
    </citation>
    <scope>GENOME REANNOTATION</scope>
    <source>
        <strain>cv. Nipponbare</strain>
    </source>
</reference>
<reference key="4">
    <citation type="journal article" date="2006" name="J. Exp. Bot.">
        <title>Genome-wide analysis of plant glutaredoxin systems.</title>
        <authorList>
            <person name="Rouhier N."/>
            <person name="Couturier J."/>
            <person name="Jacquot J.-P."/>
        </authorList>
    </citation>
    <scope>GENE FAMILY</scope>
</reference>
<dbReference type="EMBL" id="AC124143">
    <property type="status" value="NOT_ANNOTATED_CDS"/>
    <property type="molecule type" value="Genomic_DNA"/>
</dbReference>
<dbReference type="EMBL" id="AP014961">
    <property type="status" value="NOT_ANNOTATED_CDS"/>
    <property type="molecule type" value="Genomic_DNA"/>
</dbReference>
<dbReference type="RefSeq" id="XP_015640630.1">
    <property type="nucleotide sequence ID" value="XM_015785144.1"/>
</dbReference>
<dbReference type="SMR" id="P0C291"/>
<dbReference type="FunCoup" id="P0C291">
    <property type="interactions" value="32"/>
</dbReference>
<dbReference type="STRING" id="39947.P0C291"/>
<dbReference type="PaxDb" id="39947-P0C291"/>
<dbReference type="EnsemblPlants" id="Os05t0563900-02">
    <property type="protein sequence ID" value="Os05t0563900-02"/>
    <property type="gene ID" value="Os05g0563900"/>
</dbReference>
<dbReference type="Gramene" id="Os05t0563900-02">
    <property type="protein sequence ID" value="Os05t0563900-02"/>
    <property type="gene ID" value="Os05g0563900"/>
</dbReference>
<dbReference type="InParanoid" id="P0C291"/>
<dbReference type="Proteomes" id="UP000000763">
    <property type="component" value="Chromosome 5"/>
</dbReference>
<dbReference type="Proteomes" id="UP000059680">
    <property type="component" value="Chromosome 5"/>
</dbReference>
<dbReference type="GO" id="GO:0005737">
    <property type="term" value="C:cytoplasm"/>
    <property type="evidence" value="ECO:0007669"/>
    <property type="project" value="UniProtKB-SubCell"/>
</dbReference>
<dbReference type="GO" id="GO:0005634">
    <property type="term" value="C:nucleus"/>
    <property type="evidence" value="ECO:0007669"/>
    <property type="project" value="UniProtKB-SubCell"/>
</dbReference>
<dbReference type="GO" id="GO:0051537">
    <property type="term" value="F:2 iron, 2 sulfur cluster binding"/>
    <property type="evidence" value="ECO:0007669"/>
    <property type="project" value="UniProtKB-KW"/>
</dbReference>
<dbReference type="GO" id="GO:0046872">
    <property type="term" value="F:metal ion binding"/>
    <property type="evidence" value="ECO:0007669"/>
    <property type="project" value="UniProtKB-KW"/>
</dbReference>
<dbReference type="Gene3D" id="3.40.30.10">
    <property type="entry name" value="Glutaredoxin"/>
    <property type="match status" value="1"/>
</dbReference>
<dbReference type="InterPro" id="IPR011905">
    <property type="entry name" value="GlrX-like_pln_2"/>
</dbReference>
<dbReference type="InterPro" id="IPR002109">
    <property type="entry name" value="Glutaredoxin"/>
</dbReference>
<dbReference type="InterPro" id="IPR036249">
    <property type="entry name" value="Thioredoxin-like_sf"/>
</dbReference>
<dbReference type="NCBIfam" id="TIGR02189">
    <property type="entry name" value="GlrX-like_plant"/>
    <property type="match status" value="1"/>
</dbReference>
<dbReference type="PANTHER" id="PTHR10168">
    <property type="entry name" value="GLUTAREDOXIN"/>
    <property type="match status" value="1"/>
</dbReference>
<dbReference type="Pfam" id="PF00462">
    <property type="entry name" value="Glutaredoxin"/>
    <property type="match status" value="1"/>
</dbReference>
<dbReference type="SUPFAM" id="SSF52833">
    <property type="entry name" value="Thioredoxin-like"/>
    <property type="match status" value="1"/>
</dbReference>
<dbReference type="PROSITE" id="PS51354">
    <property type="entry name" value="GLUTAREDOXIN_2"/>
    <property type="match status" value="1"/>
</dbReference>
<evidence type="ECO:0000250" key="1"/>
<evidence type="ECO:0000255" key="2"/>
<evidence type="ECO:0000255" key="3">
    <source>
        <dbReference type="PROSITE-ProRule" id="PRU00686"/>
    </source>
</evidence>
<evidence type="ECO:0000256" key="4">
    <source>
        <dbReference type="SAM" id="MobiDB-lite"/>
    </source>
</evidence>
<evidence type="ECO:0000305" key="5"/>
<comment type="function">
    <text evidence="5">May only reduce GSH-thiol disulfides, but not protein disulfides.</text>
</comment>
<comment type="subcellular location">
    <subcellularLocation>
        <location evidence="1">Cytoplasm</location>
    </subcellularLocation>
    <subcellularLocation>
        <location evidence="1">Nucleus</location>
    </subcellularLocation>
</comment>
<comment type="similarity">
    <text evidence="5">Belongs to the glutaredoxin family. CC-type subfamily.</text>
</comment>
<gene>
    <name type="primary">GRXS9</name>
    <name type="ordered locus">Os05g0563900</name>
    <name type="ordered locus">LOC_Os05g48930</name>
</gene>
<proteinExistence type="inferred from homology"/>
<organism>
    <name type="scientific">Oryza sativa subsp. japonica</name>
    <name type="common">Rice</name>
    <dbReference type="NCBI Taxonomy" id="39947"/>
    <lineage>
        <taxon>Eukaryota</taxon>
        <taxon>Viridiplantae</taxon>
        <taxon>Streptophyta</taxon>
        <taxon>Embryophyta</taxon>
        <taxon>Tracheophyta</taxon>
        <taxon>Spermatophyta</taxon>
        <taxon>Magnoliopsida</taxon>
        <taxon>Liliopsida</taxon>
        <taxon>Poales</taxon>
        <taxon>Poaceae</taxon>
        <taxon>BOP clade</taxon>
        <taxon>Oryzoideae</taxon>
        <taxon>Oryzeae</taxon>
        <taxon>Oryzinae</taxon>
        <taxon>Oryza</taxon>
        <taxon>Oryza sativa</taxon>
    </lineage>
</organism>
<feature type="chain" id="PRO_0000271278" description="Monothiol glutaredoxin-S9">
    <location>
        <begin position="1"/>
        <end position="132"/>
    </location>
</feature>
<feature type="domain" description="Glutaredoxin" evidence="3">
    <location>
        <begin position="35"/>
        <end position="131"/>
    </location>
</feature>
<feature type="region of interest" description="Disordered" evidence="4">
    <location>
        <begin position="16"/>
        <end position="38"/>
    </location>
</feature>
<feature type="short sequence motif" description="Responsive for interaction with TGA factors" evidence="1">
    <location>
        <begin position="129"/>
        <end position="132"/>
    </location>
</feature>
<feature type="binding site" evidence="2">
    <location>
        <position position="55"/>
    </location>
    <ligand>
        <name>[2Fe-2S] cluster</name>
        <dbReference type="ChEBI" id="CHEBI:190135"/>
        <note>ligand shared between dimeric partners</note>
    </ligand>
</feature>